<sequence length="80" mass="8891">MDQRKSGGIPLHAVAKNVRCTSKDIKDYEIYKLLVSYGADINARVEFTGVGFSIYDGKTISEIVEFKIAFVGESEVITEE</sequence>
<accession>Q92H94</accession>
<reference key="1">
    <citation type="journal article" date="2001" name="Science">
        <title>Mechanisms of evolution in Rickettsia conorii and R. prowazekii.</title>
        <authorList>
            <person name="Ogata H."/>
            <person name="Audic S."/>
            <person name="Renesto-Audiffren P."/>
            <person name="Fournier P.-E."/>
            <person name="Barbe V."/>
            <person name="Samson D."/>
            <person name="Roux V."/>
            <person name="Cossart P."/>
            <person name="Weissenbach J."/>
            <person name="Claverie J.-M."/>
            <person name="Raoult D."/>
        </authorList>
    </citation>
    <scope>NUCLEOTIDE SEQUENCE [LARGE SCALE GENOMIC DNA]</scope>
    <source>
        <strain>ATCC VR-613 / Malish 7</strain>
    </source>
</reference>
<organism>
    <name type="scientific">Rickettsia conorii (strain ATCC VR-613 / Malish 7)</name>
    <dbReference type="NCBI Taxonomy" id="272944"/>
    <lineage>
        <taxon>Bacteria</taxon>
        <taxon>Pseudomonadati</taxon>
        <taxon>Pseudomonadota</taxon>
        <taxon>Alphaproteobacteria</taxon>
        <taxon>Rickettsiales</taxon>
        <taxon>Rickettsiaceae</taxon>
        <taxon>Rickettsieae</taxon>
        <taxon>Rickettsia</taxon>
        <taxon>spotted fever group</taxon>
    </lineage>
</organism>
<proteinExistence type="predicted"/>
<feature type="chain" id="PRO_0000280930" description="Putative ankyrin repeat protein RC0877">
    <location>
        <begin position="1"/>
        <end position="80"/>
    </location>
</feature>
<feature type="repeat" description="ANK">
    <location>
        <begin position="6"/>
        <end position="46"/>
    </location>
</feature>
<keyword id="KW-0040">ANK repeat</keyword>
<dbReference type="EMBL" id="AE006914">
    <property type="protein sequence ID" value="AAL03415.1"/>
    <property type="molecule type" value="Genomic_DNA"/>
</dbReference>
<dbReference type="PIR" id="E97809">
    <property type="entry name" value="E97809"/>
</dbReference>
<dbReference type="RefSeq" id="WP_010977482.1">
    <property type="nucleotide sequence ID" value="NC_003103.1"/>
</dbReference>
<dbReference type="SMR" id="Q92H94"/>
<dbReference type="GeneID" id="927843"/>
<dbReference type="KEGG" id="rco:RC0877"/>
<dbReference type="PATRIC" id="fig|272944.4.peg.999"/>
<dbReference type="HOGENOM" id="CLU_194611_0_0_5"/>
<dbReference type="Proteomes" id="UP000000816">
    <property type="component" value="Chromosome"/>
</dbReference>
<protein>
    <recommendedName>
        <fullName>Putative ankyrin repeat protein RC0877</fullName>
    </recommendedName>
</protein>
<gene>
    <name type="ordered locus">RC0877</name>
</gene>
<name>Y877_RICCN</name>